<feature type="transit peptide" description="Chloroplast" evidence="2">
    <location>
        <begin position="1"/>
        <end status="unknown"/>
    </location>
</feature>
<feature type="transit peptide" description="Thylakoid" evidence="2">
    <location>
        <begin status="unknown"/>
        <end position="78"/>
    </location>
</feature>
<feature type="chain" id="PRO_0000261327" description="L-ascorbate peroxidase T, chloroplastic">
    <location>
        <begin position="79"/>
        <end position="426"/>
    </location>
</feature>
<feature type="transmembrane region" description="Helical" evidence="2">
    <location>
        <begin position="397"/>
        <end position="417"/>
    </location>
</feature>
<feature type="region of interest" description="Disordered" evidence="4">
    <location>
        <begin position="245"/>
        <end position="269"/>
    </location>
</feature>
<feature type="compositionally biased region" description="Basic and acidic residues" evidence="4">
    <location>
        <begin position="246"/>
        <end position="260"/>
    </location>
</feature>
<feature type="active site" description="Proton acceptor" evidence="3">
    <location>
        <position position="112"/>
    </location>
</feature>
<feature type="binding site" description="axial binding residue" evidence="3">
    <location>
        <position position="241"/>
    </location>
    <ligand>
        <name>heme b</name>
        <dbReference type="ChEBI" id="CHEBI:60344"/>
    </ligand>
    <ligandPart>
        <name>Fe</name>
        <dbReference type="ChEBI" id="CHEBI:18248"/>
    </ligandPart>
</feature>
<feature type="binding site" evidence="1">
    <location>
        <position position="242"/>
    </location>
    <ligand>
        <name>K(+)</name>
        <dbReference type="ChEBI" id="CHEBI:29103"/>
    </ligand>
</feature>
<feature type="binding site" evidence="1">
    <location>
        <position position="274"/>
    </location>
    <ligand>
        <name>K(+)</name>
        <dbReference type="ChEBI" id="CHEBI:29103"/>
    </ligand>
</feature>
<feature type="binding site" evidence="1">
    <location>
        <position position="281"/>
    </location>
    <ligand>
        <name>K(+)</name>
        <dbReference type="ChEBI" id="CHEBI:29103"/>
    </ligand>
</feature>
<feature type="site" description="Transition state stabilizer" evidence="3">
    <location>
        <position position="108"/>
    </location>
</feature>
<feature type="sequence conflict" description="In Ref. 1; CAA67426." evidence="6" ref="1">
    <original>M</original>
    <variation>K</variation>
    <location>
        <position position="73"/>
    </location>
</feature>
<organism>
    <name type="scientific">Arabidopsis thaliana</name>
    <name type="common">Mouse-ear cress</name>
    <dbReference type="NCBI Taxonomy" id="3702"/>
    <lineage>
        <taxon>Eukaryota</taxon>
        <taxon>Viridiplantae</taxon>
        <taxon>Streptophyta</taxon>
        <taxon>Embryophyta</taxon>
        <taxon>Tracheophyta</taxon>
        <taxon>Spermatophyta</taxon>
        <taxon>Magnoliopsida</taxon>
        <taxon>eudicotyledons</taxon>
        <taxon>Gunneridae</taxon>
        <taxon>Pentapetalae</taxon>
        <taxon>rosids</taxon>
        <taxon>malvids</taxon>
        <taxon>Brassicales</taxon>
        <taxon>Brassicaceae</taxon>
        <taxon>Camelineae</taxon>
        <taxon>Arabidopsis</taxon>
    </lineage>
</organism>
<proteinExistence type="evidence at transcript level"/>
<evidence type="ECO:0000250" key="1"/>
<evidence type="ECO:0000255" key="2"/>
<evidence type="ECO:0000255" key="3">
    <source>
        <dbReference type="PROSITE-ProRule" id="PRU00297"/>
    </source>
</evidence>
<evidence type="ECO:0000256" key="4">
    <source>
        <dbReference type="SAM" id="MobiDB-lite"/>
    </source>
</evidence>
<evidence type="ECO:0000269" key="5">
    <source>
    </source>
</evidence>
<evidence type="ECO:0000305" key="6"/>
<gene>
    <name type="primary">APXT</name>
    <name type="ordered locus">At1g77490</name>
    <name type="ORF">T5M16.8</name>
</gene>
<keyword id="KW-0106">Calcium</keyword>
<keyword id="KW-0150">Chloroplast</keyword>
<keyword id="KW-0349">Heme</keyword>
<keyword id="KW-0376">Hydrogen peroxide</keyword>
<keyword id="KW-0408">Iron</keyword>
<keyword id="KW-0472">Membrane</keyword>
<keyword id="KW-0479">Metal-binding</keyword>
<keyword id="KW-0560">Oxidoreductase</keyword>
<keyword id="KW-0575">Peroxidase</keyword>
<keyword id="KW-0934">Plastid</keyword>
<keyword id="KW-0630">Potassium</keyword>
<keyword id="KW-1185">Reference proteome</keyword>
<keyword id="KW-0793">Thylakoid</keyword>
<keyword id="KW-0809">Transit peptide</keyword>
<keyword id="KW-0812">Transmembrane</keyword>
<keyword id="KW-1133">Transmembrane helix</keyword>
<dbReference type="EC" id="1.11.1.11"/>
<dbReference type="EMBL" id="X98926">
    <property type="protein sequence ID" value="CAA67426.1"/>
    <property type="molecule type" value="mRNA"/>
</dbReference>
<dbReference type="EMBL" id="AC010704">
    <property type="protein sequence ID" value="AAG51660.1"/>
    <property type="molecule type" value="Genomic_DNA"/>
</dbReference>
<dbReference type="EMBL" id="CP002684">
    <property type="protein sequence ID" value="AEE35985.1"/>
    <property type="molecule type" value="Genomic_DNA"/>
</dbReference>
<dbReference type="EMBL" id="AK229693">
    <property type="protein sequence ID" value="BAF01533.1"/>
    <property type="molecule type" value="mRNA"/>
</dbReference>
<dbReference type="EMBL" id="AY085554">
    <property type="protein sequence ID" value="AAM62777.1"/>
    <property type="molecule type" value="mRNA"/>
</dbReference>
<dbReference type="PIR" id="C96804">
    <property type="entry name" value="C96804"/>
</dbReference>
<dbReference type="RefSeq" id="NP_177873.1">
    <property type="nucleotide sequence ID" value="NM_106398.3"/>
</dbReference>
<dbReference type="SMR" id="Q42593"/>
<dbReference type="FunCoup" id="Q42593">
    <property type="interactions" value="1346"/>
</dbReference>
<dbReference type="STRING" id="3702.Q42593"/>
<dbReference type="PeroxiBase" id="1889">
    <property type="entry name" value="AtAPx06"/>
</dbReference>
<dbReference type="iPTMnet" id="Q42593"/>
<dbReference type="PaxDb" id="3702-AT1G77490.1"/>
<dbReference type="EnsemblPlants" id="AT1G77490.1">
    <property type="protein sequence ID" value="AT1G77490.1"/>
    <property type="gene ID" value="AT1G77490"/>
</dbReference>
<dbReference type="GeneID" id="844085"/>
<dbReference type="Gramene" id="AT1G77490.1">
    <property type="protein sequence ID" value="AT1G77490.1"/>
    <property type="gene ID" value="AT1G77490"/>
</dbReference>
<dbReference type="KEGG" id="ath:AT1G77490"/>
<dbReference type="Araport" id="AT1G77490"/>
<dbReference type="TAIR" id="AT1G77490">
    <property type="gene designation" value="TAPX"/>
</dbReference>
<dbReference type="eggNOG" id="ENOG502QS7Q">
    <property type="taxonomic scope" value="Eukaryota"/>
</dbReference>
<dbReference type="HOGENOM" id="CLU_036959_2_0_1"/>
<dbReference type="InParanoid" id="Q42593"/>
<dbReference type="PhylomeDB" id="Q42593"/>
<dbReference type="BioCyc" id="ARA:AT1G77490-MONOMER"/>
<dbReference type="BRENDA" id="1.11.1.11">
    <property type="organism ID" value="399"/>
</dbReference>
<dbReference type="PRO" id="PR:Q42593"/>
<dbReference type="Proteomes" id="UP000006548">
    <property type="component" value="Chromosome 1"/>
</dbReference>
<dbReference type="ExpressionAtlas" id="Q42593">
    <property type="expression patterns" value="baseline and differential"/>
</dbReference>
<dbReference type="GO" id="GO:0009507">
    <property type="term" value="C:chloroplast"/>
    <property type="evidence" value="ECO:0007005"/>
    <property type="project" value="TAIR"/>
</dbReference>
<dbReference type="GO" id="GO:0009534">
    <property type="term" value="C:chloroplast thylakoid"/>
    <property type="evidence" value="ECO:0007005"/>
    <property type="project" value="TAIR"/>
</dbReference>
<dbReference type="GO" id="GO:0009535">
    <property type="term" value="C:chloroplast thylakoid membrane"/>
    <property type="evidence" value="ECO:0007005"/>
    <property type="project" value="TAIR"/>
</dbReference>
<dbReference type="GO" id="GO:0005739">
    <property type="term" value="C:mitochondrion"/>
    <property type="evidence" value="ECO:0007005"/>
    <property type="project" value="TAIR"/>
</dbReference>
<dbReference type="GO" id="GO:0009579">
    <property type="term" value="C:thylakoid"/>
    <property type="evidence" value="ECO:0007005"/>
    <property type="project" value="TAIR"/>
</dbReference>
<dbReference type="GO" id="GO:0020037">
    <property type="term" value="F:heme binding"/>
    <property type="evidence" value="ECO:0007669"/>
    <property type="project" value="InterPro"/>
</dbReference>
<dbReference type="GO" id="GO:0016688">
    <property type="term" value="F:L-ascorbate peroxidase activity"/>
    <property type="evidence" value="ECO:0007669"/>
    <property type="project" value="UniProtKB-EC"/>
</dbReference>
<dbReference type="GO" id="GO:0046872">
    <property type="term" value="F:metal ion binding"/>
    <property type="evidence" value="ECO:0007669"/>
    <property type="project" value="UniProtKB-KW"/>
</dbReference>
<dbReference type="GO" id="GO:0034599">
    <property type="term" value="P:cellular response to oxidative stress"/>
    <property type="evidence" value="ECO:0007669"/>
    <property type="project" value="InterPro"/>
</dbReference>
<dbReference type="GO" id="GO:0010019">
    <property type="term" value="P:chloroplast-nucleus signaling pathway"/>
    <property type="evidence" value="ECO:0000315"/>
    <property type="project" value="TAIR"/>
</dbReference>
<dbReference type="GO" id="GO:0009631">
    <property type="term" value="P:cold acclimation"/>
    <property type="evidence" value="ECO:0000315"/>
    <property type="project" value="TAIR"/>
</dbReference>
<dbReference type="GO" id="GO:0042744">
    <property type="term" value="P:hydrogen peroxide catabolic process"/>
    <property type="evidence" value="ECO:0007669"/>
    <property type="project" value="UniProtKB-KW"/>
</dbReference>
<dbReference type="GO" id="GO:0071588">
    <property type="term" value="P:hydrogen peroxide mediated signaling pathway"/>
    <property type="evidence" value="ECO:0000315"/>
    <property type="project" value="TAIR"/>
</dbReference>
<dbReference type="CDD" id="cd00691">
    <property type="entry name" value="ascorbate_peroxidase"/>
    <property type="match status" value="1"/>
</dbReference>
<dbReference type="FunFam" id="1.10.520.10:FF:000007">
    <property type="entry name" value="L-ascorbate peroxidase S chloroplastic/mitochondrial"/>
    <property type="match status" value="1"/>
</dbReference>
<dbReference type="FunFam" id="1.10.420.10:FF:000005">
    <property type="entry name" value="L-ascorbate peroxidase T, chloroplastic"/>
    <property type="match status" value="1"/>
</dbReference>
<dbReference type="Gene3D" id="1.10.520.10">
    <property type="match status" value="1"/>
</dbReference>
<dbReference type="Gene3D" id="1.10.420.10">
    <property type="entry name" value="Peroxidase, domain 2"/>
    <property type="match status" value="1"/>
</dbReference>
<dbReference type="InterPro" id="IPR044831">
    <property type="entry name" value="Ccp1-like"/>
</dbReference>
<dbReference type="InterPro" id="IPR002016">
    <property type="entry name" value="Haem_peroxidase"/>
</dbReference>
<dbReference type="InterPro" id="IPR010255">
    <property type="entry name" value="Haem_peroxidase_sf"/>
</dbReference>
<dbReference type="InterPro" id="IPR002207">
    <property type="entry name" value="Peroxidase_I"/>
</dbReference>
<dbReference type="InterPro" id="IPR019793">
    <property type="entry name" value="Peroxidases_heam-ligand_BS"/>
</dbReference>
<dbReference type="PANTHER" id="PTHR31356:SF62">
    <property type="entry name" value="L-ASCORBATE PEROXIDASE T, CHLOROPLASTIC"/>
    <property type="match status" value="1"/>
</dbReference>
<dbReference type="PANTHER" id="PTHR31356">
    <property type="entry name" value="THYLAKOID LUMENAL 29 KDA PROTEIN, CHLOROPLASTIC-RELATED"/>
    <property type="match status" value="1"/>
</dbReference>
<dbReference type="Pfam" id="PF00141">
    <property type="entry name" value="peroxidase"/>
    <property type="match status" value="1"/>
</dbReference>
<dbReference type="PRINTS" id="PR00459">
    <property type="entry name" value="ASPEROXIDASE"/>
</dbReference>
<dbReference type="PRINTS" id="PR00458">
    <property type="entry name" value="PEROXIDASE"/>
</dbReference>
<dbReference type="SUPFAM" id="SSF48113">
    <property type="entry name" value="Heme-dependent peroxidases"/>
    <property type="match status" value="1"/>
</dbReference>
<dbReference type="PROSITE" id="PS00435">
    <property type="entry name" value="PEROXIDASE_1"/>
    <property type="match status" value="1"/>
</dbReference>
<dbReference type="PROSITE" id="PS50873">
    <property type="entry name" value="PEROXIDASE_4"/>
    <property type="match status" value="1"/>
</dbReference>
<reference key="1">
    <citation type="journal article" date="1997" name="Biochem. J.">
        <title>From sequence analysis of three novel ascorbate peroxidases from Arabidopsis thaliana to structure, function and evolution of seven types of ascorbate peroxidase.</title>
        <authorList>
            <person name="Jespersen H.M."/>
            <person name="Kjaersgaard I.V.H."/>
            <person name="Oestergaard L."/>
            <person name="Welinder K.G."/>
        </authorList>
    </citation>
    <scope>NUCLEOTIDE SEQUENCE [MRNA]</scope>
    <source>
        <strain>cv. Columbia</strain>
    </source>
</reference>
<reference key="2">
    <citation type="journal article" date="2000" name="Nature">
        <title>Sequence and analysis of chromosome 1 of the plant Arabidopsis thaliana.</title>
        <authorList>
            <person name="Theologis A."/>
            <person name="Ecker J.R."/>
            <person name="Palm C.J."/>
            <person name="Federspiel N.A."/>
            <person name="Kaul S."/>
            <person name="White O."/>
            <person name="Alonso J."/>
            <person name="Altafi H."/>
            <person name="Araujo R."/>
            <person name="Bowman C.L."/>
            <person name="Brooks S.Y."/>
            <person name="Buehler E."/>
            <person name="Chan A."/>
            <person name="Chao Q."/>
            <person name="Chen H."/>
            <person name="Cheuk R.F."/>
            <person name="Chin C.W."/>
            <person name="Chung M.K."/>
            <person name="Conn L."/>
            <person name="Conway A.B."/>
            <person name="Conway A.R."/>
            <person name="Creasy T.H."/>
            <person name="Dewar K."/>
            <person name="Dunn P."/>
            <person name="Etgu P."/>
            <person name="Feldblyum T.V."/>
            <person name="Feng J.-D."/>
            <person name="Fong B."/>
            <person name="Fujii C.Y."/>
            <person name="Gill J.E."/>
            <person name="Goldsmith A.D."/>
            <person name="Haas B."/>
            <person name="Hansen N.F."/>
            <person name="Hughes B."/>
            <person name="Huizar L."/>
            <person name="Hunter J.L."/>
            <person name="Jenkins J."/>
            <person name="Johnson-Hopson C."/>
            <person name="Khan S."/>
            <person name="Khaykin E."/>
            <person name="Kim C.J."/>
            <person name="Koo H.L."/>
            <person name="Kremenetskaia I."/>
            <person name="Kurtz D.B."/>
            <person name="Kwan A."/>
            <person name="Lam B."/>
            <person name="Langin-Hooper S."/>
            <person name="Lee A."/>
            <person name="Lee J.M."/>
            <person name="Lenz C.A."/>
            <person name="Li J.H."/>
            <person name="Li Y.-P."/>
            <person name="Lin X."/>
            <person name="Liu S.X."/>
            <person name="Liu Z.A."/>
            <person name="Luros J.S."/>
            <person name="Maiti R."/>
            <person name="Marziali A."/>
            <person name="Militscher J."/>
            <person name="Miranda M."/>
            <person name="Nguyen M."/>
            <person name="Nierman W.C."/>
            <person name="Osborne B.I."/>
            <person name="Pai G."/>
            <person name="Peterson J."/>
            <person name="Pham P.K."/>
            <person name="Rizzo M."/>
            <person name="Rooney T."/>
            <person name="Rowley D."/>
            <person name="Sakano H."/>
            <person name="Salzberg S.L."/>
            <person name="Schwartz J.R."/>
            <person name="Shinn P."/>
            <person name="Southwick A.M."/>
            <person name="Sun H."/>
            <person name="Tallon L.J."/>
            <person name="Tambunga G."/>
            <person name="Toriumi M.J."/>
            <person name="Town C.D."/>
            <person name="Utterback T."/>
            <person name="Van Aken S."/>
            <person name="Vaysberg M."/>
            <person name="Vysotskaia V.S."/>
            <person name="Walker M."/>
            <person name="Wu D."/>
            <person name="Yu G."/>
            <person name="Fraser C.M."/>
            <person name="Venter J.C."/>
            <person name="Davis R.W."/>
        </authorList>
    </citation>
    <scope>NUCLEOTIDE SEQUENCE [LARGE SCALE GENOMIC DNA]</scope>
    <source>
        <strain>cv. Columbia</strain>
    </source>
</reference>
<reference key="3">
    <citation type="journal article" date="2017" name="Plant J.">
        <title>Araport11: a complete reannotation of the Arabidopsis thaliana reference genome.</title>
        <authorList>
            <person name="Cheng C.Y."/>
            <person name="Krishnakumar V."/>
            <person name="Chan A.P."/>
            <person name="Thibaud-Nissen F."/>
            <person name="Schobel S."/>
            <person name="Town C.D."/>
        </authorList>
    </citation>
    <scope>GENOME REANNOTATION</scope>
    <source>
        <strain>cv. Columbia</strain>
    </source>
</reference>
<reference key="4">
    <citation type="submission" date="2006-07" db="EMBL/GenBank/DDBJ databases">
        <title>Large-scale analysis of RIKEN Arabidopsis full-length (RAFL) cDNAs.</title>
        <authorList>
            <person name="Totoki Y."/>
            <person name="Seki M."/>
            <person name="Ishida J."/>
            <person name="Nakajima M."/>
            <person name="Enju A."/>
            <person name="Kamiya A."/>
            <person name="Narusaka M."/>
            <person name="Shin-i T."/>
            <person name="Nakagawa M."/>
            <person name="Sakamoto N."/>
            <person name="Oishi K."/>
            <person name="Kohara Y."/>
            <person name="Kobayashi M."/>
            <person name="Toyoda A."/>
            <person name="Sakaki Y."/>
            <person name="Sakurai T."/>
            <person name="Iida K."/>
            <person name="Akiyama K."/>
            <person name="Satou M."/>
            <person name="Toyoda T."/>
            <person name="Konagaya A."/>
            <person name="Carninci P."/>
            <person name="Kawai J."/>
            <person name="Hayashizaki Y."/>
            <person name="Shinozaki K."/>
        </authorList>
    </citation>
    <scope>NUCLEOTIDE SEQUENCE [LARGE SCALE MRNA]</scope>
    <source>
        <strain>cv. Columbia</strain>
    </source>
</reference>
<reference key="5">
    <citation type="submission" date="2002-03" db="EMBL/GenBank/DDBJ databases">
        <title>Full-length cDNA from Arabidopsis thaliana.</title>
        <authorList>
            <person name="Brover V.V."/>
            <person name="Troukhan M.E."/>
            <person name="Alexandrov N.A."/>
            <person name="Lu Y.-P."/>
            <person name="Flavell R.B."/>
            <person name="Feldmann K.A."/>
        </authorList>
    </citation>
    <scope>NUCLEOTIDE SEQUENCE [LARGE SCALE MRNA]</scope>
</reference>
<reference key="6">
    <citation type="journal article" date="2005" name="Planta">
        <title>Expression of the Apx gene family during leaf senescence of Arabidopsis thaliana.</title>
        <authorList>
            <person name="Panchuk I.I."/>
            <person name="Zentgraf U."/>
            <person name="Volkov R.A."/>
        </authorList>
    </citation>
    <scope>DEVELOPMENTAL STAGE</scope>
</reference>
<protein>
    <recommendedName>
        <fullName>L-ascorbate peroxidase T, chloroplastic</fullName>
        <ecNumber>1.11.1.11</ecNumber>
    </recommendedName>
    <alternativeName>
        <fullName>Thylakoid-bound ascorbate peroxidase</fullName>
        <shortName>AtAPx06</shortName>
        <shortName>tAPX</shortName>
    </alternativeName>
</protein>
<comment type="function">
    <text evidence="1">Plays a key role in hydrogen peroxide removal.</text>
</comment>
<comment type="catalytic activity">
    <reaction>
        <text>L-ascorbate + H2O2 = L-dehydroascorbate + 2 H2O</text>
        <dbReference type="Rhea" id="RHEA:22996"/>
        <dbReference type="ChEBI" id="CHEBI:15377"/>
        <dbReference type="ChEBI" id="CHEBI:16240"/>
        <dbReference type="ChEBI" id="CHEBI:38290"/>
        <dbReference type="ChEBI" id="CHEBI:58539"/>
        <dbReference type="EC" id="1.11.1.11"/>
    </reaction>
</comment>
<comment type="cofactor">
    <cofactor>
        <name>heme b</name>
        <dbReference type="ChEBI" id="CHEBI:60344"/>
    </cofactor>
    <text>Binds 1 heme b (iron(II)-protoporphyrin IX) group per subunit.</text>
</comment>
<comment type="subcellular location">
    <subcellularLocation>
        <location evidence="6">Plastid</location>
        <location evidence="6">Chloroplast thylakoid membrane</location>
        <topology evidence="6">Single-pass membrane protein</topology>
    </subcellularLocation>
</comment>
<comment type="developmental stage">
    <text evidence="5">Down-regulated during leaf senescence.</text>
</comment>
<comment type="miscellaneous">
    <text evidence="1">Binds one cation per subunit; probably K(+), but might also be Ca(2+).</text>
</comment>
<comment type="similarity">
    <text evidence="6">Belongs to the peroxidase family. Ascorbate peroxidase subfamily.</text>
</comment>
<name>APXT_ARATH</name>
<accession>Q42593</accession>
<accession>Q9CAQ6</accession>
<sequence length="426" mass="46092">MSVSLSAASHLLCSSTRVSLSPAVTSSSSSPVVALSSSTSPHSLGSVASSSLFPHSSFVLQKKHPINGTSTRMISPKCAASDAAQLISAKEDIKVLLRTKFCHPILVRLGWHDAGTYNKNIEEWPLRGGANGSLRFEAELKHAANAGLLNALKLIQPLKDKYPNISYADLFQLASATAIEEAGGPDIPMKYGRVDVVAPEQCPEEGRLPDAGPPSPADHLRDVFYRMGLDDKEIVALSGAHTLGRARPDRSGWGKPETKYTKTGPGEAGGQSWTVKWLKFDNSYFKDIKEKRDDDLLVLPTDAALFEDPSFKNYAEKYAEDVAAFFKDYAEAHAKLSNLGAKFDPPEGIVIENVPEKFVAAKYSTGKKELSDSMKKKIRAEYEAIGGSPDKPLPTNYFLNIIIAIGVLVLLSTLFGGNNNSDFSGF</sequence>